<proteinExistence type="inferred from homology"/>
<reference key="1">
    <citation type="journal article" date="2011" name="Stand. Genomic Sci.">
        <title>Complete genome sequence of Rhodospirillum rubrum type strain (S1).</title>
        <authorList>
            <person name="Munk A.C."/>
            <person name="Copeland A."/>
            <person name="Lucas S."/>
            <person name="Lapidus A."/>
            <person name="Del Rio T.G."/>
            <person name="Barry K."/>
            <person name="Detter J.C."/>
            <person name="Hammon N."/>
            <person name="Israni S."/>
            <person name="Pitluck S."/>
            <person name="Brettin T."/>
            <person name="Bruce D."/>
            <person name="Han C."/>
            <person name="Tapia R."/>
            <person name="Gilna P."/>
            <person name="Schmutz J."/>
            <person name="Larimer F."/>
            <person name="Land M."/>
            <person name="Kyrpides N.C."/>
            <person name="Mavromatis K."/>
            <person name="Richardson P."/>
            <person name="Rohde M."/>
            <person name="Goeker M."/>
            <person name="Klenk H.P."/>
            <person name="Zhang Y."/>
            <person name="Roberts G.P."/>
            <person name="Reslewic S."/>
            <person name="Schwartz D.C."/>
        </authorList>
    </citation>
    <scope>NUCLEOTIDE SEQUENCE [LARGE SCALE GENOMIC DNA]</scope>
    <source>
        <strain>ATCC 11170 / ATH 1.1.1 / DSM 467 / LMG 4362 / NCIMB 8255 / S1</strain>
    </source>
</reference>
<gene>
    <name evidence="1" type="primary">atpF1</name>
    <name type="ordered locus">Rru_A3243</name>
</gene>
<protein>
    <recommendedName>
        <fullName evidence="1">ATP synthase subunit b 1</fullName>
    </recommendedName>
    <alternativeName>
        <fullName evidence="1">ATP synthase F(0) sector subunit b 1</fullName>
    </alternativeName>
    <alternativeName>
        <fullName evidence="1">ATPase subunit I 1</fullName>
    </alternativeName>
    <alternativeName>
        <fullName evidence="1">F-type ATPase subunit b 1</fullName>
        <shortName evidence="1">F-ATPase subunit b 1</shortName>
    </alternativeName>
</protein>
<organism>
    <name type="scientific">Rhodospirillum rubrum (strain ATCC 11170 / ATH 1.1.1 / DSM 467 / LMG 4362 / NCIMB 8255 / S1)</name>
    <dbReference type="NCBI Taxonomy" id="269796"/>
    <lineage>
        <taxon>Bacteria</taxon>
        <taxon>Pseudomonadati</taxon>
        <taxon>Pseudomonadota</taxon>
        <taxon>Alphaproteobacteria</taxon>
        <taxon>Rhodospirillales</taxon>
        <taxon>Rhodospirillaceae</taxon>
        <taxon>Rhodospirillum</taxon>
    </lineage>
</organism>
<dbReference type="EMBL" id="CP000230">
    <property type="protein sequence ID" value="ABC24038.1"/>
    <property type="molecule type" value="Genomic_DNA"/>
</dbReference>
<dbReference type="RefSeq" id="WP_011390991.1">
    <property type="nucleotide sequence ID" value="NC_007643.1"/>
</dbReference>
<dbReference type="RefSeq" id="YP_428325.1">
    <property type="nucleotide sequence ID" value="NC_007643.1"/>
</dbReference>
<dbReference type="SMR" id="Q2RPA7"/>
<dbReference type="STRING" id="269796.Rru_A3243"/>
<dbReference type="EnsemblBacteria" id="ABC24038">
    <property type="protein sequence ID" value="ABC24038"/>
    <property type="gene ID" value="Rru_A3243"/>
</dbReference>
<dbReference type="KEGG" id="rru:Rru_A3243"/>
<dbReference type="PATRIC" id="fig|269796.9.peg.3357"/>
<dbReference type="eggNOG" id="COG0711">
    <property type="taxonomic scope" value="Bacteria"/>
</dbReference>
<dbReference type="HOGENOM" id="CLU_079215_6_2_5"/>
<dbReference type="PhylomeDB" id="Q2RPA7"/>
<dbReference type="Proteomes" id="UP000001929">
    <property type="component" value="Chromosome"/>
</dbReference>
<dbReference type="GO" id="GO:0005886">
    <property type="term" value="C:plasma membrane"/>
    <property type="evidence" value="ECO:0007669"/>
    <property type="project" value="UniProtKB-SubCell"/>
</dbReference>
<dbReference type="GO" id="GO:0045259">
    <property type="term" value="C:proton-transporting ATP synthase complex"/>
    <property type="evidence" value="ECO:0007669"/>
    <property type="project" value="UniProtKB-KW"/>
</dbReference>
<dbReference type="GO" id="GO:0046933">
    <property type="term" value="F:proton-transporting ATP synthase activity, rotational mechanism"/>
    <property type="evidence" value="ECO:0007669"/>
    <property type="project" value="UniProtKB-UniRule"/>
</dbReference>
<dbReference type="GO" id="GO:0046961">
    <property type="term" value="F:proton-transporting ATPase activity, rotational mechanism"/>
    <property type="evidence" value="ECO:0007669"/>
    <property type="project" value="TreeGrafter"/>
</dbReference>
<dbReference type="CDD" id="cd06503">
    <property type="entry name" value="ATP-synt_Fo_b"/>
    <property type="match status" value="1"/>
</dbReference>
<dbReference type="HAMAP" id="MF_01398">
    <property type="entry name" value="ATP_synth_b_bprime"/>
    <property type="match status" value="1"/>
</dbReference>
<dbReference type="InterPro" id="IPR002146">
    <property type="entry name" value="ATP_synth_b/b'su_bac/chlpt"/>
</dbReference>
<dbReference type="InterPro" id="IPR050059">
    <property type="entry name" value="ATP_synthase_B_chain"/>
</dbReference>
<dbReference type="PANTHER" id="PTHR33445:SF1">
    <property type="entry name" value="ATP SYNTHASE SUBUNIT B"/>
    <property type="match status" value="1"/>
</dbReference>
<dbReference type="PANTHER" id="PTHR33445">
    <property type="entry name" value="ATP SYNTHASE SUBUNIT B', CHLOROPLASTIC"/>
    <property type="match status" value="1"/>
</dbReference>
<dbReference type="Pfam" id="PF00430">
    <property type="entry name" value="ATP-synt_B"/>
    <property type="match status" value="1"/>
</dbReference>
<name>ATPF1_RHORT</name>
<sequence>MISLALAAETAEHGGEAASHGGLFADPAFWVSIAFLMVVGFVYIKAKNKILGALDGRGAAVKAKLDEARKLRDDAQALLAEYQRRQRDAMKEADEIIRHAKDEAARLRAKAEADLEASIRRREQQAVDRIAQAEAQALAQVRNEAVDVAVSAARSLMAGSLAKADQNRLIDAAIADLPGKLH</sequence>
<comment type="function">
    <text evidence="1">F(1)F(0) ATP synthase produces ATP from ADP in the presence of a proton or sodium gradient. F-type ATPases consist of two structural domains, F(1) containing the extramembraneous catalytic core and F(0) containing the membrane proton channel, linked together by a central stalk and a peripheral stalk. During catalysis, ATP synthesis in the catalytic domain of F(1) is coupled via a rotary mechanism of the central stalk subunits to proton translocation.</text>
</comment>
<comment type="function">
    <text evidence="1">Component of the F(0) channel, it forms part of the peripheral stalk, linking F(1) to F(0).</text>
</comment>
<comment type="subunit">
    <text evidence="1">F-type ATPases have 2 components, F(1) - the catalytic core - and F(0) - the membrane proton channel. F(1) has five subunits: alpha(3), beta(3), gamma(1), delta(1), epsilon(1). F(0) has three main subunits: a(1), b(2) and c(10-14). The alpha and beta chains form an alternating ring which encloses part of the gamma chain. F(1) is attached to F(0) by a central stalk formed by the gamma and epsilon chains, while a peripheral stalk is formed by the delta and b chains.</text>
</comment>
<comment type="subcellular location">
    <subcellularLocation>
        <location evidence="1">Cell inner membrane</location>
        <topology evidence="1">Single-pass membrane protein</topology>
    </subcellularLocation>
</comment>
<comment type="similarity">
    <text evidence="1">Belongs to the ATPase B chain family.</text>
</comment>
<accession>Q2RPA7</accession>
<keyword id="KW-0066">ATP synthesis</keyword>
<keyword id="KW-0997">Cell inner membrane</keyword>
<keyword id="KW-1003">Cell membrane</keyword>
<keyword id="KW-0138">CF(0)</keyword>
<keyword id="KW-0375">Hydrogen ion transport</keyword>
<keyword id="KW-0406">Ion transport</keyword>
<keyword id="KW-0472">Membrane</keyword>
<keyword id="KW-1185">Reference proteome</keyword>
<keyword id="KW-0812">Transmembrane</keyword>
<keyword id="KW-1133">Transmembrane helix</keyword>
<keyword id="KW-0813">Transport</keyword>
<evidence type="ECO:0000255" key="1">
    <source>
        <dbReference type="HAMAP-Rule" id="MF_01398"/>
    </source>
</evidence>
<feature type="chain" id="PRO_0000368728" description="ATP synthase subunit b 1">
    <location>
        <begin position="1"/>
        <end position="182"/>
    </location>
</feature>
<feature type="transmembrane region" description="Helical" evidence="1">
    <location>
        <begin position="24"/>
        <end position="44"/>
    </location>
</feature>